<proteinExistence type="evidence at protein level"/>
<organismHost>
    <name type="scientific">Homo sapiens</name>
    <name type="common">Human</name>
    <dbReference type="NCBI Taxonomy" id="9606"/>
</organismHost>
<reference key="1">
    <citation type="journal article" date="1989" name="Mol. Immunol.">
        <title>The loss of subtypic determinants in alleles, d/y or w/r, on hepatitis B surface antigen.</title>
        <authorList>
            <person name="Okamoto H."/>
            <person name="Omi S."/>
            <person name="Wang Y."/>
            <person name="Itoh Y."/>
            <person name="Tsuda F."/>
            <person name="Tanaka T."/>
            <person name="Akahane Y."/>
            <person name="Miyakawa Y."/>
            <person name="Mayumi M."/>
        </authorList>
    </citation>
    <scope>NUCLEOTIDE SEQUENCE [GENOMIC DNA] OF 175-400</scope>
    <source>
        <strain>Isolate pAD14</strain>
    </source>
</reference>
<reference key="2">
    <citation type="journal article" date="2005" name="J. Med. Virol.">
        <title>Comparison of full length sequences of hepatitis B virus isolates in hepatocellular carcinoma patients and asymptomatic carriers of Korea.</title>
        <authorList>
            <person name="Song B.C."/>
            <person name="Kim H."/>
            <person name="Kim S.H."/>
            <person name="Cha C.Y."/>
            <person name="Kook Y.H."/>
            <person name="Kim B.J."/>
        </authorList>
    </citation>
    <scope>NUCLEOTIDE SEQUENCE [GENOMIC DNA]</scope>
</reference>
<reference key="3">
    <citation type="journal article" date="1996" name="Intervirology">
        <title>Functions of the large hepatitis B virus surface protein in viral particle morphogenesis.</title>
        <authorList>
            <person name="Bruss V."/>
            <person name="Gerhardt E."/>
            <person name="Vieluf K."/>
            <person name="Wunderlich G."/>
        </authorList>
    </citation>
    <scope>REVIEW</scope>
</reference>
<reference key="4">
    <citation type="journal article" date="1998" name="Adv. Exp. Med. Biol.">
        <title>Role of glycan processing in hepatitis B virus envelope protein trafficking.</title>
        <authorList>
            <person name="Block T.M."/>
            <person name="Lu X."/>
            <person name="Mehta A."/>
            <person name="Park J."/>
            <person name="Blumberg B.S."/>
            <person name="Dwek R."/>
        </authorList>
    </citation>
    <scope>REVIEW</scope>
</reference>
<reference key="5">
    <citation type="journal article" date="2004" name="Virus Res.">
        <title>Envelopment of the hepatitis B virus nucleocapsid.</title>
        <authorList>
            <person name="Bruss V."/>
        </authorList>
    </citation>
    <scope>REVIEW</scope>
</reference>
<reference key="6">
    <citation type="journal article" date="2006" name="Cancer Sci.">
        <title>Hepatitis B virus pre-S mutants, endoplasmic reticulum stress and hepatocarcinogenesis.</title>
        <authorList>
            <person name="Wang H.C."/>
            <person name="Huang W."/>
            <person name="Lai M.D."/>
            <person name="Su I.J."/>
        </authorList>
    </citation>
    <scope>REVIEW</scope>
</reference>
<dbReference type="EMBL" id="M27765">
    <property type="protein sequence ID" value="AAA45518.1"/>
    <property type="status" value="ALT_INIT"/>
    <property type="molecule type" value="Genomic_DNA"/>
</dbReference>
<dbReference type="EMBL" id="AY641560">
    <property type="protein sequence ID" value="AAV52022.1"/>
    <property type="molecule type" value="Genomic_DNA"/>
</dbReference>
<dbReference type="PIR" id="PL0053">
    <property type="entry name" value="SAVLAD"/>
</dbReference>
<dbReference type="BMRB" id="P31868"/>
<dbReference type="SMR" id="P31868"/>
<dbReference type="GlyCosmos" id="P31868">
    <property type="glycosylation" value="2 sites, No reported glycans"/>
</dbReference>
<dbReference type="Proteomes" id="UP000099634">
    <property type="component" value="Genome"/>
</dbReference>
<dbReference type="GO" id="GO:0016020">
    <property type="term" value="C:membrane"/>
    <property type="evidence" value="ECO:0007669"/>
    <property type="project" value="UniProtKB-UniRule"/>
</dbReference>
<dbReference type="GO" id="GO:0019031">
    <property type="term" value="C:viral envelope"/>
    <property type="evidence" value="ECO:0007669"/>
    <property type="project" value="UniProtKB-KW"/>
</dbReference>
<dbReference type="GO" id="GO:0055036">
    <property type="term" value="C:virion membrane"/>
    <property type="evidence" value="ECO:0007669"/>
    <property type="project" value="UniProtKB-SubCell"/>
</dbReference>
<dbReference type="GO" id="GO:0075513">
    <property type="term" value="P:caveolin-mediated endocytosis of virus by host cell"/>
    <property type="evidence" value="ECO:0007669"/>
    <property type="project" value="UniProtKB-KW"/>
</dbReference>
<dbReference type="GO" id="GO:0039654">
    <property type="term" value="P:fusion of virus membrane with host endosome membrane"/>
    <property type="evidence" value="ECO:0007669"/>
    <property type="project" value="UniProtKB-KW"/>
</dbReference>
<dbReference type="GO" id="GO:0019062">
    <property type="term" value="P:virion attachment to host cell"/>
    <property type="evidence" value="ECO:0007669"/>
    <property type="project" value="UniProtKB-UniRule"/>
</dbReference>
<dbReference type="HAMAP" id="MF_04075">
    <property type="entry name" value="HBV_HBSAG"/>
    <property type="match status" value="1"/>
</dbReference>
<dbReference type="InterPro" id="IPR000349">
    <property type="entry name" value="HBV_HBSAG"/>
</dbReference>
<dbReference type="Pfam" id="PF00695">
    <property type="entry name" value="vMSA"/>
    <property type="match status" value="1"/>
</dbReference>
<keyword id="KW-0007">Acetylation</keyword>
<keyword id="KW-0024">Alternative initiation</keyword>
<keyword id="KW-0025">Alternative splicing</keyword>
<keyword id="KW-1166">Caveolin-mediated endocytosis of virus by host</keyword>
<keyword id="KW-1170">Fusion of virus membrane with host endosomal membrane</keyword>
<keyword id="KW-1168">Fusion of virus membrane with host membrane</keyword>
<keyword id="KW-0325">Glycoprotein</keyword>
<keyword id="KW-0945">Host-virus interaction</keyword>
<keyword id="KW-0449">Lipoprotein</keyword>
<keyword id="KW-0472">Membrane</keyword>
<keyword id="KW-0519">Myristate</keyword>
<keyword id="KW-0812">Transmembrane</keyword>
<keyword id="KW-1133">Transmembrane helix</keyword>
<keyword id="KW-1161">Viral attachment to host cell</keyword>
<keyword id="KW-0261">Viral envelope protein</keyword>
<keyword id="KW-1162">Viral penetration into host cytoplasm</keyword>
<keyword id="KW-0946">Virion</keyword>
<keyword id="KW-1164">Virus endocytosis by host</keyword>
<keyword id="KW-1160">Virus entry into host cell</keyword>
<organism>
    <name type="scientific">Hepatitis B virus genotype C subtype adr (isolate Japan/Nishioka/1983)</name>
    <name type="common">HBV-C</name>
    <dbReference type="NCBI Taxonomy" id="482133"/>
    <lineage>
        <taxon>Viruses</taxon>
        <taxon>Riboviria</taxon>
        <taxon>Pararnavirae</taxon>
        <taxon>Artverviricota</taxon>
        <taxon>Revtraviricetes</taxon>
        <taxon>Blubervirales</taxon>
        <taxon>Hepadnaviridae</taxon>
        <taxon>Orthohepadnavirus</taxon>
        <taxon>Hepatitis B virus</taxon>
    </lineage>
</organism>
<sequence length="400" mass="43712">MGGWSSKPRQGMGTNLSVPNPLGFFPDHQLDPAFGANSNNPDWDFNPNKDHWPEANQVGVGTFGPGFTPPHGGLLGWSPQAQGILTTVPAAPPPASTNRQSGRQPTPISPPLRDSHPQAMQWNSTTFHQALLDPRVRGLYFPAGGSSSGTVNPVPTTASPISSIFSRTGDPAPNMENTTSGFLGPLLVLQAGFFLLTRILTIPQSLDSWWTSLNFLGGAPTCPGQNSQSPTSNHSPTSCPPICPGYRWMCLRRFIIFLFILLLCLIFLLVLLDYQGMLPVCPLLPGTSTTSTGPCKTCTTPAQGTSMFPSCCCTKPSDGNCTCIPIPSSWAFARFLWEWASVRFSWLSLLVPFVQWFAGLSPTVWLSVIWMMWYWGPSLYNILSPFLPLLPIFFCLWVYI</sequence>
<feature type="initiator methionine" description="Removed; by host" evidence="3">
    <location>
        <position position="1"/>
    </location>
</feature>
<feature type="chain" id="PRO_0000222355" description="Large envelope protein" evidence="3">
    <location>
        <begin position="2"/>
        <end position="400"/>
    </location>
</feature>
<feature type="topological domain" description="Intravirion; in internal conformation" evidence="3">
    <location>
        <begin position="2"/>
        <end position="253"/>
    </location>
</feature>
<feature type="topological domain" description="Virion surface; in external conformation" evidence="3">
    <location>
        <begin position="2"/>
        <end position="181"/>
    </location>
</feature>
<feature type="transmembrane region" description="Helical; Name=TM1; Note=In external conformation" evidence="3">
    <location>
        <begin position="182"/>
        <end position="202"/>
    </location>
</feature>
<feature type="topological domain" description="Intravirion; in external conformation" evidence="3">
    <location>
        <begin position="203"/>
        <end position="253"/>
    </location>
</feature>
<feature type="transmembrane region" description="Helical; Name=TM2" evidence="3">
    <location>
        <begin position="254"/>
        <end position="274"/>
    </location>
</feature>
<feature type="topological domain" description="Virion surface" evidence="3">
    <location>
        <begin position="275"/>
        <end position="348"/>
    </location>
</feature>
<feature type="transmembrane region" description="Helical" evidence="3">
    <location>
        <begin position="349"/>
        <end position="369"/>
    </location>
</feature>
<feature type="topological domain" description="Intravirion" evidence="3">
    <location>
        <begin position="370"/>
        <end position="375"/>
    </location>
</feature>
<feature type="transmembrane region" description="Helical; Name=TM3" evidence="3">
    <location>
        <begin position="376"/>
        <end position="398"/>
    </location>
</feature>
<feature type="topological domain" description="Virion surface" evidence="3">
    <location>
        <begin position="399"/>
        <end position="400"/>
    </location>
</feature>
<feature type="region of interest" description="Disordered" evidence="4">
    <location>
        <begin position="1"/>
        <end position="54"/>
    </location>
</feature>
<feature type="region of interest" description="Pre-S" evidence="3">
    <location>
        <begin position="2"/>
        <end position="174"/>
    </location>
</feature>
<feature type="region of interest" description="Pre-S1" evidence="3">
    <location>
        <begin position="2"/>
        <end position="119"/>
    </location>
</feature>
<feature type="region of interest" description="Disordered" evidence="4">
    <location>
        <begin position="85"/>
        <end position="116"/>
    </location>
</feature>
<feature type="region of interest" description="Pre-S2" evidence="3">
    <location>
        <begin position="120"/>
        <end position="174"/>
    </location>
</feature>
<feature type="compositionally biased region" description="Polar residues" evidence="4">
    <location>
        <begin position="96"/>
        <end position="106"/>
    </location>
</feature>
<feature type="lipid moiety-binding region" description="N-myristoyl glycine; by host" evidence="3">
    <location>
        <position position="2"/>
    </location>
</feature>
<feature type="glycosylation site" description="N-linked (GlcNAc...) asparagine; by host" evidence="3">
    <location>
        <position position="320"/>
    </location>
</feature>
<feature type="splice variant" id="VSP_031384" description="In isoform S." evidence="5">
    <location>
        <begin position="1"/>
        <end position="174"/>
    </location>
</feature>
<feature type="splice variant" id="VSP_031385" description="In isoform M." evidence="5">
    <location>
        <begin position="1"/>
        <end position="119"/>
    </location>
</feature>
<feature type="sequence variant" description="In strain: Isolate pAD14.">
    <original>T</original>
    <variation>I</variation>
    <location>
        <position position="178"/>
    </location>
</feature>
<feature type="sequence variant" description="In strain: Isolate pAD14.">
    <original>R</original>
    <variation>N</variation>
    <location>
        <position position="334"/>
    </location>
</feature>
<feature type="modified residue" description="N-acetylmethionine" evidence="5">
    <location sequence="P31868-2">
        <position position="1"/>
    </location>
</feature>
<feature type="glycosylation site" description="N-linked (GlcNAc...) asparagine" evidence="5">
    <location sequence="P31868-2">
        <position position="4"/>
    </location>
</feature>
<comment type="function">
    <text evidence="3">The large envelope protein exists in two topological conformations, one which is termed 'external' or Le-HBsAg and the other 'internal' or Li-HBsAg. In its external conformation the protein attaches the virus to cell receptors and thereby initiating infection. This interaction determines the species specificity and liver tropism. This attachment induces virion internalization predominantly through caveolin-mediated endocytosis. The large envelope protein also assures fusion between virion membrane and endosomal membrane. In its internal conformation the protein plays a role in virion morphogenesis and mediates the contact with the nucleocapsid like a matrix protein.</text>
</comment>
<comment type="function">
    <text evidence="3">The middle envelope protein plays an important role in the budding of the virion. It is involved in the induction of budding in a nucleocapsid independent way. In this process the majority of envelope proteins bud to form subviral lipoprotein particles of 22 nm of diameter that do not contain a nucleocapsid.</text>
</comment>
<comment type="subunit">
    <molecule>Isoform L</molecule>
    <text evidence="2">In its internal form (Li-HBsAg), interacts with the capsid protein and with the isoform S. Interacts with host chaperone CANX.</text>
</comment>
<comment type="subunit">
    <molecule>Isoform M</molecule>
    <text evidence="2">Associates with host chaperone CANX through its pre-S2 N glycan; this association may be essential for isoform M proper secretion.</text>
</comment>
<comment type="subunit">
    <molecule>Isoform S</molecule>
    <text evidence="2">Interacts with isoform L. Interacts with the antigens of satellite virus HDV (HDVAgs); this interaction is required for encapsidation of HDV genomic RNA.</text>
</comment>
<comment type="subcellular location">
    <subcellularLocation>
        <location evidence="3">Virion membrane</location>
    </subcellularLocation>
</comment>
<comment type="alternative products">
    <event type="alternative splicing"/>
    <event type="alternative initiation"/>
    <isoform>
        <id>P31868-1</id>
        <name>L</name>
        <name>Large envelope protein</name>
        <name>LHB</name>
        <name>L-HBsAg</name>
        <sequence type="displayed"/>
    </isoform>
    <isoform>
        <id>P31868-2</id>
        <name>M</name>
        <name>Middle envelope protein</name>
        <name>MHB</name>
        <name>M-HBsAg</name>
        <sequence type="described" ref="VSP_031385"/>
    </isoform>
    <isoform>
        <id>P31868-3</id>
        <name>S</name>
        <name>Small envelope protein</name>
        <name>SHB</name>
        <name>S-HBsAg</name>
        <sequence type="described" ref="VSP_031384"/>
    </isoform>
</comment>
<comment type="domain">
    <text evidence="3">The large envelope protein is synthesized with the pre-S region at the cytosolic side of the endoplasmic reticulum and, hence will be within the virion after budding. Therefore the pre-S region is not N-glycosylated. Later a post-translational translocation of N-terminal pre-S and TM1 domains occur in about 50% of proteins at the virion surface. These molecules change their topology by an unknown mechanism, resulting in exposure of pre-S region at virion surface. For isoform M in contrast, the pre-S2 region is translocated cotranslationally to the endoplasmic reticulum lumen and is N-glycosylated.</text>
</comment>
<comment type="PTM">
    <text evidence="1 3">Isoform M is N-terminally acetylated by host at a ratio of 90%, and N-glycosylated by host at the pre-S2 region.</text>
</comment>
<comment type="PTM">
    <text evidence="3">Myristoylated.</text>
</comment>
<comment type="biotechnology">
    <text>Systematic vaccination of individuals at risk of exposure to the virus has been the main method of controlling the morbidity and mortality associated with hepatitis B. The first hepatitis B vaccine was manufactured by the purification and inactivation of HBsAg obtained from the plasma of chronic hepatitis B virus carriers. The vaccine is now produced by recombinant DNA techniques and expression of the S isoform in yeast cells. The pre-S region do not seem to induce strong enough antigenic response.</text>
</comment>
<comment type="similarity">
    <text evidence="3">Belongs to the orthohepadnavirus major surface antigen family.</text>
</comment>
<comment type="sequence caution" evidence="5">
    <conflict type="erroneous initiation">
        <sequence resource="EMBL-CDS" id="AAA45518"/>
    </conflict>
</comment>
<name>HBSAG_HBVC1</name>
<accession>P31868</accession>
<accession>Q5SDK8</accession>
<gene>
    <name evidence="3" type="primary">S</name>
</gene>
<evidence type="ECO:0000250" key="1">
    <source>
        <dbReference type="UniProtKB" id="P03138"/>
    </source>
</evidence>
<evidence type="ECO:0000250" key="2">
    <source>
        <dbReference type="UniProtKB" id="P03141"/>
    </source>
</evidence>
<evidence type="ECO:0000255" key="3">
    <source>
        <dbReference type="HAMAP-Rule" id="MF_04075"/>
    </source>
</evidence>
<evidence type="ECO:0000256" key="4">
    <source>
        <dbReference type="SAM" id="MobiDB-lite"/>
    </source>
</evidence>
<evidence type="ECO:0000305" key="5"/>
<protein>
    <recommendedName>
        <fullName evidence="3">Large envelope protein</fullName>
    </recommendedName>
    <alternativeName>
        <fullName evidence="3">L glycoprotein</fullName>
    </alternativeName>
    <alternativeName>
        <fullName evidence="3">L-HBsAg</fullName>
        <shortName evidence="3">LHB</shortName>
    </alternativeName>
    <alternativeName>
        <fullName evidence="3">Large S protein</fullName>
    </alternativeName>
    <alternativeName>
        <fullName evidence="3">Large surface protein</fullName>
    </alternativeName>
    <alternativeName>
        <fullName evidence="3">Major surface antigen</fullName>
    </alternativeName>
</protein>